<organism>
    <name type="scientific">Yersinia pseudotuberculosis serotype IB (strain PB1/+)</name>
    <dbReference type="NCBI Taxonomy" id="502801"/>
    <lineage>
        <taxon>Bacteria</taxon>
        <taxon>Pseudomonadati</taxon>
        <taxon>Pseudomonadota</taxon>
        <taxon>Gammaproteobacteria</taxon>
        <taxon>Enterobacterales</taxon>
        <taxon>Yersiniaceae</taxon>
        <taxon>Yersinia</taxon>
    </lineage>
</organism>
<comment type="function">
    <text evidence="2">Catalyzes the reversible phosphorolytic breakdown of the N-glycosidic bond in the beta-(deoxy)ribonucleoside molecules, with the formation of the corresponding free purine bases and pentose-1-phosphate.</text>
</comment>
<comment type="catalytic activity">
    <reaction evidence="2">
        <text>a purine D-ribonucleoside + phosphate = a purine nucleobase + alpha-D-ribose 1-phosphate</text>
        <dbReference type="Rhea" id="RHEA:19805"/>
        <dbReference type="ChEBI" id="CHEBI:26386"/>
        <dbReference type="ChEBI" id="CHEBI:43474"/>
        <dbReference type="ChEBI" id="CHEBI:57720"/>
        <dbReference type="ChEBI" id="CHEBI:142355"/>
        <dbReference type="EC" id="2.4.2.1"/>
    </reaction>
</comment>
<comment type="catalytic activity">
    <reaction evidence="2">
        <text>a purine 2'-deoxy-D-ribonucleoside + phosphate = a purine nucleobase + 2-deoxy-alpha-D-ribose 1-phosphate</text>
        <dbReference type="Rhea" id="RHEA:36431"/>
        <dbReference type="ChEBI" id="CHEBI:26386"/>
        <dbReference type="ChEBI" id="CHEBI:43474"/>
        <dbReference type="ChEBI" id="CHEBI:57259"/>
        <dbReference type="ChEBI" id="CHEBI:142361"/>
        <dbReference type="EC" id="2.4.2.1"/>
    </reaction>
</comment>
<comment type="subunit">
    <text evidence="2">Homohexamer; trimer of homodimers.</text>
</comment>
<comment type="similarity">
    <text evidence="2">Belongs to the PNP/UDP phosphorylase family.</text>
</comment>
<feature type="chain" id="PRO_1000186243" description="Purine nucleoside phosphorylase DeoD-type">
    <location>
        <begin position="1"/>
        <end position="239"/>
    </location>
</feature>
<feature type="active site" description="Proton donor" evidence="2">
    <location>
        <position position="205"/>
    </location>
</feature>
<feature type="binding site" evidence="1">
    <location>
        <position position="5"/>
    </location>
    <ligand>
        <name>a purine D-ribonucleoside</name>
        <dbReference type="ChEBI" id="CHEBI:142355"/>
        <note>ligand shared between dimeric partners</note>
    </ligand>
</feature>
<feature type="binding site" description="in other chain" evidence="1">
    <location>
        <position position="21"/>
    </location>
    <ligand>
        <name>phosphate</name>
        <dbReference type="ChEBI" id="CHEBI:43474"/>
        <note>ligand shared between dimeric partners</note>
    </ligand>
</feature>
<feature type="binding site" description="in other chain" evidence="1">
    <location>
        <position position="25"/>
    </location>
    <ligand>
        <name>phosphate</name>
        <dbReference type="ChEBI" id="CHEBI:43474"/>
        <note>ligand shared between dimeric partners</note>
    </ligand>
</feature>
<feature type="binding site" evidence="1">
    <location>
        <position position="44"/>
    </location>
    <ligand>
        <name>phosphate</name>
        <dbReference type="ChEBI" id="CHEBI:43474"/>
        <note>ligand shared between dimeric partners</note>
    </ligand>
</feature>
<feature type="binding site" description="in other chain" evidence="1">
    <location>
        <begin position="88"/>
        <end position="91"/>
    </location>
    <ligand>
        <name>phosphate</name>
        <dbReference type="ChEBI" id="CHEBI:43474"/>
        <note>ligand shared between dimeric partners</note>
    </ligand>
</feature>
<feature type="binding site" description="in other chain" evidence="1">
    <location>
        <begin position="180"/>
        <end position="182"/>
    </location>
    <ligand>
        <name>a purine D-ribonucleoside</name>
        <dbReference type="ChEBI" id="CHEBI:142355"/>
        <note>ligand shared between dimeric partners</note>
    </ligand>
</feature>
<feature type="binding site" description="in other chain" evidence="1">
    <location>
        <begin position="204"/>
        <end position="205"/>
    </location>
    <ligand>
        <name>a purine D-ribonucleoside</name>
        <dbReference type="ChEBI" id="CHEBI:142355"/>
        <note>ligand shared between dimeric partners</note>
    </ligand>
</feature>
<feature type="site" description="Important for catalytic activity" evidence="2">
    <location>
        <position position="218"/>
    </location>
</feature>
<proteinExistence type="inferred from homology"/>
<keyword id="KW-0328">Glycosyltransferase</keyword>
<keyword id="KW-0808">Transferase</keyword>
<dbReference type="EC" id="2.4.2.1" evidence="2"/>
<dbReference type="EMBL" id="CP001048">
    <property type="protein sequence ID" value="ACC87590.1"/>
    <property type="molecule type" value="Genomic_DNA"/>
</dbReference>
<dbReference type="RefSeq" id="WP_011191689.1">
    <property type="nucleotide sequence ID" value="NZ_CP009780.1"/>
</dbReference>
<dbReference type="SMR" id="B2K3J1"/>
<dbReference type="GeneID" id="49787416"/>
<dbReference type="KEGG" id="ypb:YPTS_0606"/>
<dbReference type="PATRIC" id="fig|502801.10.peg.4284"/>
<dbReference type="GO" id="GO:0005829">
    <property type="term" value="C:cytosol"/>
    <property type="evidence" value="ECO:0007669"/>
    <property type="project" value="TreeGrafter"/>
</dbReference>
<dbReference type="GO" id="GO:0004731">
    <property type="term" value="F:purine-nucleoside phosphorylase activity"/>
    <property type="evidence" value="ECO:0007669"/>
    <property type="project" value="UniProtKB-UniRule"/>
</dbReference>
<dbReference type="GO" id="GO:0006152">
    <property type="term" value="P:purine nucleoside catabolic process"/>
    <property type="evidence" value="ECO:0007669"/>
    <property type="project" value="TreeGrafter"/>
</dbReference>
<dbReference type="CDD" id="cd09006">
    <property type="entry name" value="PNP_EcPNPI-like"/>
    <property type="match status" value="1"/>
</dbReference>
<dbReference type="FunFam" id="3.40.50.1580:FF:000002">
    <property type="entry name" value="Purine nucleoside phosphorylase DeoD-type"/>
    <property type="match status" value="1"/>
</dbReference>
<dbReference type="Gene3D" id="3.40.50.1580">
    <property type="entry name" value="Nucleoside phosphorylase domain"/>
    <property type="match status" value="1"/>
</dbReference>
<dbReference type="HAMAP" id="MF_01627">
    <property type="entry name" value="Pur_nucleosid_phosp"/>
    <property type="match status" value="1"/>
</dbReference>
<dbReference type="InterPro" id="IPR004402">
    <property type="entry name" value="DeoD-type"/>
</dbReference>
<dbReference type="InterPro" id="IPR018016">
    <property type="entry name" value="Nucleoside_phosphorylase_CS"/>
</dbReference>
<dbReference type="InterPro" id="IPR000845">
    <property type="entry name" value="Nucleoside_phosphorylase_d"/>
</dbReference>
<dbReference type="InterPro" id="IPR035994">
    <property type="entry name" value="Nucleoside_phosphorylase_sf"/>
</dbReference>
<dbReference type="NCBIfam" id="TIGR00107">
    <property type="entry name" value="deoD"/>
    <property type="match status" value="1"/>
</dbReference>
<dbReference type="NCBIfam" id="NF004489">
    <property type="entry name" value="PRK05819.1"/>
    <property type="match status" value="1"/>
</dbReference>
<dbReference type="NCBIfam" id="NF009914">
    <property type="entry name" value="PRK13374.1"/>
    <property type="match status" value="1"/>
</dbReference>
<dbReference type="PANTHER" id="PTHR43691:SF2">
    <property type="entry name" value="PURINE NUCLEOSIDE PHOSPHORYLASE DEOD-TYPE"/>
    <property type="match status" value="1"/>
</dbReference>
<dbReference type="PANTHER" id="PTHR43691">
    <property type="entry name" value="URIDINE PHOSPHORYLASE"/>
    <property type="match status" value="1"/>
</dbReference>
<dbReference type="Pfam" id="PF01048">
    <property type="entry name" value="PNP_UDP_1"/>
    <property type="match status" value="1"/>
</dbReference>
<dbReference type="SUPFAM" id="SSF53167">
    <property type="entry name" value="Purine and uridine phosphorylases"/>
    <property type="match status" value="1"/>
</dbReference>
<dbReference type="PROSITE" id="PS01232">
    <property type="entry name" value="PNP_UDP_1"/>
    <property type="match status" value="1"/>
</dbReference>
<evidence type="ECO:0000250" key="1">
    <source>
        <dbReference type="UniProtKB" id="P50389"/>
    </source>
</evidence>
<evidence type="ECO:0000255" key="2">
    <source>
        <dbReference type="HAMAP-Rule" id="MF_01627"/>
    </source>
</evidence>
<gene>
    <name evidence="2" type="primary">deoD</name>
    <name type="ordered locus">YPTS_0606</name>
</gene>
<protein>
    <recommendedName>
        <fullName evidence="2">Purine nucleoside phosphorylase DeoD-type</fullName>
        <shortName evidence="2">PNP</shortName>
        <ecNumber evidence="2">2.4.2.1</ecNumber>
    </recommendedName>
</protein>
<sequence>MATPHINAEMGDFADVVLMPGDPLRAKFIAETFLQDVREVNNVRGMLGFTGTYKGRKISVMGHGMGIPSCSIYAKELITDFGVKKIIRVGSCGAVRTDVKLRDVVIGMGACTDSKVNRMRFKDHDYAAIADFEMTRNAVDAAKAKGVNVRVGNLFSADLFYTPDPQMFDVMEKYGILGVEMEAAGIYGVAAEFGAKALTICTVSDHIRTGEQTTAAERQTTFNDMIEIALESVLLGDNA</sequence>
<name>DEOD_YERPB</name>
<accession>B2K3J1</accession>
<reference key="1">
    <citation type="submission" date="2008-04" db="EMBL/GenBank/DDBJ databases">
        <title>Complete sequence of Yersinia pseudotuberculosis PB1/+.</title>
        <authorList>
            <person name="Copeland A."/>
            <person name="Lucas S."/>
            <person name="Lapidus A."/>
            <person name="Glavina del Rio T."/>
            <person name="Dalin E."/>
            <person name="Tice H."/>
            <person name="Bruce D."/>
            <person name="Goodwin L."/>
            <person name="Pitluck S."/>
            <person name="Munk A.C."/>
            <person name="Brettin T."/>
            <person name="Detter J.C."/>
            <person name="Han C."/>
            <person name="Tapia R."/>
            <person name="Schmutz J."/>
            <person name="Larimer F."/>
            <person name="Land M."/>
            <person name="Hauser L."/>
            <person name="Challacombe J.F."/>
            <person name="Green L."/>
            <person name="Lindler L.E."/>
            <person name="Nikolich M.P."/>
            <person name="Richardson P."/>
        </authorList>
    </citation>
    <scope>NUCLEOTIDE SEQUENCE [LARGE SCALE GENOMIC DNA]</scope>
    <source>
        <strain>PB1/+</strain>
    </source>
</reference>